<protein>
    <recommendedName>
        <fullName evidence="1">Probable cyclic pyranopterin monophosphate synthase</fullName>
        <ecNumber evidence="1">4.6.1.17</ecNumber>
    </recommendedName>
    <alternativeName>
        <fullName evidence="1">Molybdenum cofactor biosynthesis protein C</fullName>
    </alternativeName>
</protein>
<organism>
    <name type="scientific">Saccharolobus solfataricus (strain ATCC 35092 / DSM 1617 / JCM 11322 / P2)</name>
    <name type="common">Sulfolobus solfataricus</name>
    <dbReference type="NCBI Taxonomy" id="273057"/>
    <lineage>
        <taxon>Archaea</taxon>
        <taxon>Thermoproteota</taxon>
        <taxon>Thermoprotei</taxon>
        <taxon>Sulfolobales</taxon>
        <taxon>Sulfolobaceae</taxon>
        <taxon>Saccharolobus</taxon>
    </lineage>
</organism>
<keyword id="KW-0456">Lyase</keyword>
<keyword id="KW-0501">Molybdenum cofactor biosynthesis</keyword>
<keyword id="KW-1185">Reference proteome</keyword>
<accession>Q9UXF7</accession>
<dbReference type="EC" id="4.6.1.17" evidence="1"/>
<dbReference type="EMBL" id="Y18930">
    <property type="protein sequence ID" value="CAB57533.1"/>
    <property type="molecule type" value="Genomic_DNA"/>
</dbReference>
<dbReference type="EMBL" id="AE006641">
    <property type="protein sequence ID" value="AAK41067.1"/>
    <property type="molecule type" value="Genomic_DNA"/>
</dbReference>
<dbReference type="PIR" id="D90226">
    <property type="entry name" value="D90226"/>
</dbReference>
<dbReference type="RefSeq" id="WP_009991359.1">
    <property type="nucleotide sequence ID" value="NC_002754.1"/>
</dbReference>
<dbReference type="SMR" id="Q9UXF7"/>
<dbReference type="FunCoup" id="Q9UXF7">
    <property type="interactions" value="102"/>
</dbReference>
<dbReference type="STRING" id="273057.SSO0770"/>
<dbReference type="PaxDb" id="273057-SSO0770"/>
<dbReference type="EnsemblBacteria" id="AAK41067">
    <property type="protein sequence ID" value="AAK41067"/>
    <property type="gene ID" value="SSO0770"/>
</dbReference>
<dbReference type="GeneID" id="44129775"/>
<dbReference type="KEGG" id="sso:SSO0770"/>
<dbReference type="PATRIC" id="fig|273057.12.peg.769"/>
<dbReference type="eggNOG" id="arCOG01530">
    <property type="taxonomic scope" value="Archaea"/>
</dbReference>
<dbReference type="HOGENOM" id="CLU_074693_1_2_2"/>
<dbReference type="InParanoid" id="Q9UXF7"/>
<dbReference type="PhylomeDB" id="Q9UXF7"/>
<dbReference type="UniPathway" id="UPA00344"/>
<dbReference type="Proteomes" id="UP000001974">
    <property type="component" value="Chromosome"/>
</dbReference>
<dbReference type="GO" id="GO:0061799">
    <property type="term" value="F:cyclic pyranopterin monophosphate synthase activity"/>
    <property type="evidence" value="ECO:0007669"/>
    <property type="project" value="UniProtKB-UniRule"/>
</dbReference>
<dbReference type="GO" id="GO:0006777">
    <property type="term" value="P:Mo-molybdopterin cofactor biosynthetic process"/>
    <property type="evidence" value="ECO:0007669"/>
    <property type="project" value="UniProtKB-UniRule"/>
</dbReference>
<dbReference type="CDD" id="cd01419">
    <property type="entry name" value="MoaC_A"/>
    <property type="match status" value="1"/>
</dbReference>
<dbReference type="Gene3D" id="3.30.70.640">
    <property type="entry name" value="Molybdopterin cofactor biosynthesis C (MoaC) domain"/>
    <property type="match status" value="1"/>
</dbReference>
<dbReference type="HAMAP" id="MF_01224_A">
    <property type="entry name" value="MoaC_A"/>
    <property type="match status" value="1"/>
</dbReference>
<dbReference type="InterPro" id="IPR023047">
    <property type="entry name" value="Mo_CF_biosynth-C_arc"/>
</dbReference>
<dbReference type="InterPro" id="IPR023045">
    <property type="entry name" value="MoaC"/>
</dbReference>
<dbReference type="InterPro" id="IPR036522">
    <property type="entry name" value="MoaC_sf"/>
</dbReference>
<dbReference type="InterPro" id="IPR050105">
    <property type="entry name" value="MoCo_biosynth_MoaA/MoaC"/>
</dbReference>
<dbReference type="InterPro" id="IPR002820">
    <property type="entry name" value="Mopterin_CF_biosynth-C_dom"/>
</dbReference>
<dbReference type="NCBIfam" id="TIGR00581">
    <property type="entry name" value="moaC"/>
    <property type="match status" value="1"/>
</dbReference>
<dbReference type="NCBIfam" id="NF008999">
    <property type="entry name" value="PRK12343.1"/>
    <property type="match status" value="1"/>
</dbReference>
<dbReference type="PANTHER" id="PTHR22960">
    <property type="entry name" value="MOLYBDOPTERIN COFACTOR SYNTHESIS PROTEIN A"/>
    <property type="match status" value="1"/>
</dbReference>
<dbReference type="Pfam" id="PF01967">
    <property type="entry name" value="MoaC"/>
    <property type="match status" value="1"/>
</dbReference>
<dbReference type="SUPFAM" id="SSF55040">
    <property type="entry name" value="Molybdenum cofactor biosynthesis protein C, MoaC"/>
    <property type="match status" value="1"/>
</dbReference>
<evidence type="ECO:0000255" key="1">
    <source>
        <dbReference type="HAMAP-Rule" id="MF_01224"/>
    </source>
</evidence>
<proteinExistence type="inferred from homology"/>
<name>MOAC_SACS2</name>
<sequence>MSSEAKMVDISQKETVLREAEAEGFIKLKNDTIKRIIENEIEKGNVITVAKTAGIMAAKKTSELLPLCHLIPLENVDIDIKIENSGIRVRSKVKAHYKTGVEMEALVATSISLLTIWDMVKKYEKDENGKYPYTMIDDIKVIDKIKEKD</sequence>
<comment type="function">
    <text evidence="1">Catalyzes the conversion of (8S)-3',8-cyclo-7,8-dihydroguanosine 5'-triphosphate to cyclic pyranopterin monophosphate (cPMP).</text>
</comment>
<comment type="catalytic activity">
    <reaction evidence="1">
        <text>(8S)-3',8-cyclo-7,8-dihydroguanosine 5'-triphosphate = cyclic pyranopterin phosphate + diphosphate</text>
        <dbReference type="Rhea" id="RHEA:49580"/>
        <dbReference type="ChEBI" id="CHEBI:33019"/>
        <dbReference type="ChEBI" id="CHEBI:59648"/>
        <dbReference type="ChEBI" id="CHEBI:131766"/>
        <dbReference type="EC" id="4.6.1.17"/>
    </reaction>
</comment>
<comment type="pathway">
    <text evidence="1">Cofactor biosynthesis; molybdopterin biosynthesis.</text>
</comment>
<comment type="subunit">
    <text evidence="1">Homohexamer; trimer of dimers.</text>
</comment>
<comment type="similarity">
    <text evidence="1">Belongs to the MoaC family.</text>
</comment>
<feature type="chain" id="PRO_0000097864" description="Probable cyclic pyranopterin monophosphate synthase">
    <location>
        <begin position="1"/>
        <end position="149"/>
    </location>
</feature>
<feature type="active site" evidence="1">
    <location>
        <position position="118"/>
    </location>
</feature>
<feature type="binding site" evidence="1">
    <location>
        <begin position="67"/>
        <end position="69"/>
    </location>
    <ligand>
        <name>substrate</name>
    </ligand>
</feature>
<feature type="binding site" evidence="1">
    <location>
        <begin position="103"/>
        <end position="104"/>
    </location>
    <ligand>
        <name>substrate</name>
    </ligand>
</feature>
<reference key="1">
    <citation type="journal article" date="2000" name="Genome">
        <title>Gene content and organization of a 281-kbp contig from the genome of the extremely thermophilic archaeon, Sulfolobus solfataricus P2.</title>
        <authorList>
            <person name="Charlebois R.L."/>
            <person name="Singh R.K."/>
            <person name="Chan-Weiher C.C.-Y."/>
            <person name="Allard G."/>
            <person name="Chow C."/>
            <person name="Confalonieri F."/>
            <person name="Curtis B."/>
            <person name="Duguet M."/>
            <person name="Erauso G."/>
            <person name="Faguy D."/>
            <person name="Gaasterland T."/>
            <person name="Garrett R.A."/>
            <person name="Gordon P."/>
            <person name="Jeffries A.C."/>
            <person name="Kozera C."/>
            <person name="Kushwaha N."/>
            <person name="Lafleur E."/>
            <person name="Medina N."/>
            <person name="Peng X."/>
            <person name="Penny S.L."/>
            <person name="She Q."/>
            <person name="St Jean A."/>
            <person name="van der Oost J."/>
            <person name="Young F."/>
            <person name="Zivanovic Y."/>
            <person name="Doolittle W.F."/>
            <person name="Ragan M.A."/>
            <person name="Sensen C.W."/>
        </authorList>
    </citation>
    <scope>NUCLEOTIDE SEQUENCE [LARGE SCALE GENOMIC DNA]</scope>
    <source>
        <strain>ATCC 35092 / DSM 1617 / JCM 11322 / P2</strain>
    </source>
</reference>
<reference key="2">
    <citation type="journal article" date="2001" name="Proc. Natl. Acad. Sci. U.S.A.">
        <title>The complete genome of the crenarchaeon Sulfolobus solfataricus P2.</title>
        <authorList>
            <person name="She Q."/>
            <person name="Singh R.K."/>
            <person name="Confalonieri F."/>
            <person name="Zivanovic Y."/>
            <person name="Allard G."/>
            <person name="Awayez M.J."/>
            <person name="Chan-Weiher C.C.-Y."/>
            <person name="Clausen I.G."/>
            <person name="Curtis B.A."/>
            <person name="De Moors A."/>
            <person name="Erauso G."/>
            <person name="Fletcher C."/>
            <person name="Gordon P.M.K."/>
            <person name="Heikamp-de Jong I."/>
            <person name="Jeffries A.C."/>
            <person name="Kozera C.J."/>
            <person name="Medina N."/>
            <person name="Peng X."/>
            <person name="Thi-Ngoc H.P."/>
            <person name="Redder P."/>
            <person name="Schenk M.E."/>
            <person name="Theriault C."/>
            <person name="Tolstrup N."/>
            <person name="Charlebois R.L."/>
            <person name="Doolittle W.F."/>
            <person name="Duguet M."/>
            <person name="Gaasterland T."/>
            <person name="Garrett R.A."/>
            <person name="Ragan M.A."/>
            <person name="Sensen C.W."/>
            <person name="Van der Oost J."/>
        </authorList>
    </citation>
    <scope>NUCLEOTIDE SEQUENCE [LARGE SCALE GENOMIC DNA]</scope>
    <source>
        <strain>ATCC 35092 / DSM 1617 / JCM 11322 / P2</strain>
    </source>
</reference>
<gene>
    <name evidence="1" type="primary">moaC</name>
    <name type="ordered locus">SSO0770</name>
    <name type="ORF">C40_006</name>
</gene>